<proteinExistence type="inferred from homology"/>
<name>RL31_NATPD</name>
<protein>
    <recommendedName>
        <fullName evidence="1">Large ribosomal subunit protein eL31</fullName>
    </recommendedName>
    <alternativeName>
        <fullName evidence="2">50S ribosomal protein L31e</fullName>
    </alternativeName>
</protein>
<accession>Q3ITD6</accession>
<organism>
    <name type="scientific">Natronomonas pharaonis (strain ATCC 35678 / DSM 2160 / CIP 103997 / JCM 8858 / NBRC 14720 / NCIMB 2260 / Gabara)</name>
    <name type="common">Halobacterium pharaonis</name>
    <dbReference type="NCBI Taxonomy" id="348780"/>
    <lineage>
        <taxon>Archaea</taxon>
        <taxon>Methanobacteriati</taxon>
        <taxon>Methanobacteriota</taxon>
        <taxon>Stenosarchaea group</taxon>
        <taxon>Halobacteria</taxon>
        <taxon>Halobacteriales</taxon>
        <taxon>Haloarculaceae</taxon>
        <taxon>Natronomonas</taxon>
    </lineage>
</organism>
<gene>
    <name evidence="1" type="primary">rpl31e</name>
    <name type="ordered locus">NP_1014A</name>
</gene>
<comment type="similarity">
    <text evidence="1">Belongs to the eukaryotic ribosomal protein eL31 family.</text>
</comment>
<keyword id="KW-1185">Reference proteome</keyword>
<keyword id="KW-0687">Ribonucleoprotein</keyword>
<keyword id="KW-0689">Ribosomal protein</keyword>
<evidence type="ECO:0000255" key="1">
    <source>
        <dbReference type="HAMAP-Rule" id="MF_00410"/>
    </source>
</evidence>
<evidence type="ECO:0000305" key="2"/>
<reference key="1">
    <citation type="journal article" date="2005" name="Genome Res.">
        <title>Living with two extremes: conclusions from the genome sequence of Natronomonas pharaonis.</title>
        <authorList>
            <person name="Falb M."/>
            <person name="Pfeiffer F."/>
            <person name="Palm P."/>
            <person name="Rodewald K."/>
            <person name="Hickmann V."/>
            <person name="Tittor J."/>
            <person name="Oesterhelt D."/>
        </authorList>
    </citation>
    <scope>NUCLEOTIDE SEQUENCE [LARGE SCALE GENOMIC DNA]</scope>
    <source>
        <strain>ATCC 35678 / DSM 2160 / CIP 103997 / JCM 8858 / NBRC 14720 / NCIMB 2260 / Gabara</strain>
    </source>
</reference>
<feature type="chain" id="PRO_1000049919" description="Large ribosomal subunit protein eL31">
    <location>
        <begin position="1"/>
        <end position="90"/>
    </location>
</feature>
<sequence length="90" mass="10135">MSAEFDERVMTVPLRDVLAESKGQRADKAMSLVRSHLAQHFNVEEDAVRLDPSINEAVWERGRSKPPSELRVRAARFEEEGEAVVEAETA</sequence>
<dbReference type="EMBL" id="CR936257">
    <property type="protein sequence ID" value="CAI48598.1"/>
    <property type="molecule type" value="Genomic_DNA"/>
</dbReference>
<dbReference type="RefSeq" id="WP_011322233.1">
    <property type="nucleotide sequence ID" value="NC_007426.1"/>
</dbReference>
<dbReference type="SMR" id="Q3ITD6"/>
<dbReference type="STRING" id="348780.NP_1014A"/>
<dbReference type="EnsemblBacteria" id="CAI48598">
    <property type="protein sequence ID" value="CAI48598"/>
    <property type="gene ID" value="NP_1014A"/>
</dbReference>
<dbReference type="GeneID" id="3703139"/>
<dbReference type="KEGG" id="nph:NP_1014A"/>
<dbReference type="eggNOG" id="arCOG04473">
    <property type="taxonomic scope" value="Archaea"/>
</dbReference>
<dbReference type="HOGENOM" id="CLU_112570_3_2_2"/>
<dbReference type="OrthoDB" id="10127at2157"/>
<dbReference type="Proteomes" id="UP000002698">
    <property type="component" value="Chromosome"/>
</dbReference>
<dbReference type="GO" id="GO:0022625">
    <property type="term" value="C:cytosolic large ribosomal subunit"/>
    <property type="evidence" value="ECO:0007669"/>
    <property type="project" value="TreeGrafter"/>
</dbReference>
<dbReference type="GO" id="GO:0003735">
    <property type="term" value="F:structural constituent of ribosome"/>
    <property type="evidence" value="ECO:0007669"/>
    <property type="project" value="InterPro"/>
</dbReference>
<dbReference type="GO" id="GO:0002181">
    <property type="term" value="P:cytoplasmic translation"/>
    <property type="evidence" value="ECO:0007669"/>
    <property type="project" value="TreeGrafter"/>
</dbReference>
<dbReference type="CDD" id="cd00463">
    <property type="entry name" value="Ribosomal_L31e"/>
    <property type="match status" value="1"/>
</dbReference>
<dbReference type="Gene3D" id="3.10.440.10">
    <property type="match status" value="1"/>
</dbReference>
<dbReference type="HAMAP" id="MF_00410">
    <property type="entry name" value="Ribosomal_eL31"/>
    <property type="match status" value="1"/>
</dbReference>
<dbReference type="InterPro" id="IPR000054">
    <property type="entry name" value="Ribosomal_eL31"/>
</dbReference>
<dbReference type="InterPro" id="IPR020052">
    <property type="entry name" value="Ribosomal_eL31_CS"/>
</dbReference>
<dbReference type="InterPro" id="IPR023621">
    <property type="entry name" value="Ribosomal_eL31_dom_sf"/>
</dbReference>
<dbReference type="NCBIfam" id="NF002258">
    <property type="entry name" value="PRK01192.1-1"/>
    <property type="match status" value="1"/>
</dbReference>
<dbReference type="PANTHER" id="PTHR10956">
    <property type="entry name" value="60S RIBOSOMAL PROTEIN L31"/>
    <property type="match status" value="1"/>
</dbReference>
<dbReference type="PANTHER" id="PTHR10956:SF0">
    <property type="entry name" value="60S RIBOSOMAL PROTEIN L31"/>
    <property type="match status" value="1"/>
</dbReference>
<dbReference type="Pfam" id="PF01198">
    <property type="entry name" value="Ribosomal_L31e"/>
    <property type="match status" value="1"/>
</dbReference>
<dbReference type="SMART" id="SM01380">
    <property type="entry name" value="Ribosomal_L31e"/>
    <property type="match status" value="1"/>
</dbReference>
<dbReference type="SUPFAM" id="SSF54575">
    <property type="entry name" value="Ribosomal protein L31e"/>
    <property type="match status" value="1"/>
</dbReference>
<dbReference type="PROSITE" id="PS01144">
    <property type="entry name" value="RIBOSOMAL_L31E"/>
    <property type="match status" value="1"/>
</dbReference>